<sequence>MRTLWIMAVLLVGVEGSLFELGKMILQETGKNPAKSYGAYGCNCGVLGRGKPKDATDRCCYVHKCCYKKLTGCNPKKDRYSYSWKDKTIVCGENNSCLKELCECDKAVAICLRENLNTYNKKYRYYLKPLCKKADAC</sequence>
<protein>
    <recommendedName>
        <fullName>Basic phospholipase A2 homolog 2</fullName>
        <shortName>svPLA2 homolog</shortName>
    </recommendedName>
    <alternativeName>
        <fullName evidence="18 19">Myotoxin II</fullName>
        <shortName evidence="16">Basp-II</shortName>
        <shortName evidence="17">Lys49 Mt-II</shortName>
        <shortName>MtxII</shortName>
    </alternativeName>
</protein>
<evidence type="ECO:0000250" key="1">
    <source>
        <dbReference type="UniProtKB" id="I6L8L6"/>
    </source>
</evidence>
<evidence type="ECO:0000269" key="2">
    <source>
    </source>
</evidence>
<evidence type="ECO:0000269" key="3">
    <source>
    </source>
</evidence>
<evidence type="ECO:0000269" key="4">
    <source>
    </source>
</evidence>
<evidence type="ECO:0000269" key="5">
    <source>
    </source>
</evidence>
<evidence type="ECO:0000269" key="6">
    <source>
    </source>
</evidence>
<evidence type="ECO:0000269" key="7">
    <source>
    </source>
</evidence>
<evidence type="ECO:0000269" key="8">
    <source>
    </source>
</evidence>
<evidence type="ECO:0000269" key="9">
    <source>
    </source>
</evidence>
<evidence type="ECO:0000269" key="10">
    <source>
    </source>
</evidence>
<evidence type="ECO:0000269" key="11">
    <source>
    </source>
</evidence>
<evidence type="ECO:0000269" key="12">
    <source>
    </source>
</evidence>
<evidence type="ECO:0000269" key="13">
    <source>
    </source>
</evidence>
<evidence type="ECO:0000269" key="14">
    <source>
    </source>
</evidence>
<evidence type="ECO:0000269" key="15">
    <source>
    </source>
</evidence>
<evidence type="ECO:0000303" key="16">
    <source>
    </source>
</evidence>
<evidence type="ECO:0000303" key="17">
    <source>
    </source>
</evidence>
<evidence type="ECO:0000303" key="18">
    <source>
    </source>
</evidence>
<evidence type="ECO:0000303" key="19">
    <source>
    </source>
</evidence>
<evidence type="ECO:0000305" key="20"/>
<evidence type="ECO:0000305" key="21">
    <source>
    </source>
</evidence>
<evidence type="ECO:0000305" key="22">
    <source>
    </source>
</evidence>
<evidence type="ECO:0000312" key="23">
    <source>
        <dbReference type="PDB" id="1CLP"/>
    </source>
</evidence>
<evidence type="ECO:0000312" key="24">
    <source>
        <dbReference type="PDB" id="1Y4L"/>
    </source>
</evidence>
<evidence type="ECO:0007829" key="25">
    <source>
        <dbReference type="PDB" id="1Y4L"/>
    </source>
</evidence>
<dbReference type="PIR" id="S13900">
    <property type="entry name" value="S13900"/>
</dbReference>
<dbReference type="PDB" id="1CLP">
    <property type="method" value="X-ray"/>
    <property type="resolution" value="2.80 A"/>
    <property type="chains" value="A/B=17-137"/>
</dbReference>
<dbReference type="PDB" id="1Y4L">
    <property type="method" value="X-ray"/>
    <property type="resolution" value="1.70 A"/>
    <property type="chains" value="A/B=17-137"/>
</dbReference>
<dbReference type="PDBsum" id="1CLP"/>
<dbReference type="PDBsum" id="1Y4L"/>
<dbReference type="SMR" id="P24605"/>
<dbReference type="Allergome" id="6319">
    <property type="allergen name" value="Bot as 1"/>
</dbReference>
<dbReference type="EvolutionaryTrace" id="P24605"/>
<dbReference type="GO" id="GO:0005576">
    <property type="term" value="C:extracellular region"/>
    <property type="evidence" value="ECO:0007669"/>
    <property type="project" value="UniProtKB-SubCell"/>
</dbReference>
<dbReference type="GO" id="GO:0005509">
    <property type="term" value="F:calcium ion binding"/>
    <property type="evidence" value="ECO:0007669"/>
    <property type="project" value="InterPro"/>
</dbReference>
<dbReference type="GO" id="GO:0047498">
    <property type="term" value="F:calcium-dependent phospholipase A2 activity"/>
    <property type="evidence" value="ECO:0007669"/>
    <property type="project" value="TreeGrafter"/>
</dbReference>
<dbReference type="GO" id="GO:0008201">
    <property type="term" value="F:heparin binding"/>
    <property type="evidence" value="ECO:0007669"/>
    <property type="project" value="UniProtKB-KW"/>
</dbReference>
<dbReference type="GO" id="GO:0005543">
    <property type="term" value="F:phospholipid binding"/>
    <property type="evidence" value="ECO:0007669"/>
    <property type="project" value="TreeGrafter"/>
</dbReference>
<dbReference type="GO" id="GO:0090729">
    <property type="term" value="F:toxin activity"/>
    <property type="evidence" value="ECO:0007669"/>
    <property type="project" value="UniProtKB-KW"/>
</dbReference>
<dbReference type="GO" id="GO:0050482">
    <property type="term" value="P:arachidonate secretion"/>
    <property type="evidence" value="ECO:0007669"/>
    <property type="project" value="InterPro"/>
</dbReference>
<dbReference type="GO" id="GO:0042742">
    <property type="term" value="P:defense response to bacterium"/>
    <property type="evidence" value="ECO:0007669"/>
    <property type="project" value="UniProtKB-KW"/>
</dbReference>
<dbReference type="GO" id="GO:0016042">
    <property type="term" value="P:lipid catabolic process"/>
    <property type="evidence" value="ECO:0007669"/>
    <property type="project" value="InterPro"/>
</dbReference>
<dbReference type="GO" id="GO:0042130">
    <property type="term" value="P:negative regulation of T cell proliferation"/>
    <property type="evidence" value="ECO:0007669"/>
    <property type="project" value="TreeGrafter"/>
</dbReference>
<dbReference type="GO" id="GO:0006644">
    <property type="term" value="P:phospholipid metabolic process"/>
    <property type="evidence" value="ECO:0007669"/>
    <property type="project" value="InterPro"/>
</dbReference>
<dbReference type="CDD" id="cd00125">
    <property type="entry name" value="PLA2c"/>
    <property type="match status" value="1"/>
</dbReference>
<dbReference type="FunFam" id="1.20.90.10:FF:000001">
    <property type="entry name" value="Basic phospholipase A2 homolog"/>
    <property type="match status" value="1"/>
</dbReference>
<dbReference type="Gene3D" id="1.20.90.10">
    <property type="entry name" value="Phospholipase A2 domain"/>
    <property type="match status" value="1"/>
</dbReference>
<dbReference type="InterPro" id="IPR001211">
    <property type="entry name" value="PLipase_A2"/>
</dbReference>
<dbReference type="InterPro" id="IPR033112">
    <property type="entry name" value="PLipase_A2_Asp_AS"/>
</dbReference>
<dbReference type="InterPro" id="IPR016090">
    <property type="entry name" value="PLipase_A2_dom"/>
</dbReference>
<dbReference type="InterPro" id="IPR036444">
    <property type="entry name" value="PLipase_A2_dom_sf"/>
</dbReference>
<dbReference type="InterPro" id="IPR033113">
    <property type="entry name" value="PLipase_A2_His_AS"/>
</dbReference>
<dbReference type="PANTHER" id="PTHR11716">
    <property type="entry name" value="PHOSPHOLIPASE A2 FAMILY MEMBER"/>
    <property type="match status" value="1"/>
</dbReference>
<dbReference type="PANTHER" id="PTHR11716:SF9">
    <property type="entry name" value="PHOSPHOLIPASE A2, MEMBRANE ASSOCIATED"/>
    <property type="match status" value="1"/>
</dbReference>
<dbReference type="Pfam" id="PF00068">
    <property type="entry name" value="Phospholip_A2_1"/>
    <property type="match status" value="1"/>
</dbReference>
<dbReference type="PRINTS" id="PR00389">
    <property type="entry name" value="PHPHLIPASEA2"/>
</dbReference>
<dbReference type="SMART" id="SM00085">
    <property type="entry name" value="PA2c"/>
    <property type="match status" value="1"/>
</dbReference>
<dbReference type="SUPFAM" id="SSF48619">
    <property type="entry name" value="Phospholipase A2, PLA2"/>
    <property type="match status" value="1"/>
</dbReference>
<dbReference type="PROSITE" id="PS00119">
    <property type="entry name" value="PA2_ASP"/>
    <property type="match status" value="1"/>
</dbReference>
<dbReference type="PROSITE" id="PS00118">
    <property type="entry name" value="PA2_HIS"/>
    <property type="match status" value="1"/>
</dbReference>
<keyword id="KW-0002">3D-structure</keyword>
<keyword id="KW-0044">Antibiotic</keyword>
<keyword id="KW-0929">Antimicrobial</keyword>
<keyword id="KW-1203">Blood coagulation cascade inhibiting toxin</keyword>
<keyword id="KW-0903">Direct protein sequencing</keyword>
<keyword id="KW-1015">Disulfide bond</keyword>
<keyword id="KW-1199">Hemostasis impairing toxin</keyword>
<keyword id="KW-0358">Heparin-binding</keyword>
<keyword id="KW-0449">Lipoprotein</keyword>
<keyword id="KW-0959">Myotoxin</keyword>
<keyword id="KW-0582">Pharmaceutical</keyword>
<keyword id="KW-0964">Secreted</keyword>
<keyword id="KW-0732">Signal</keyword>
<keyword id="KW-0800">Toxin</keyword>
<organism>
    <name type="scientific">Bothrops asper</name>
    <name type="common">Terciopelo</name>
    <dbReference type="NCBI Taxonomy" id="8722"/>
    <lineage>
        <taxon>Eukaryota</taxon>
        <taxon>Metazoa</taxon>
        <taxon>Chordata</taxon>
        <taxon>Craniata</taxon>
        <taxon>Vertebrata</taxon>
        <taxon>Euteleostomi</taxon>
        <taxon>Lepidosauria</taxon>
        <taxon>Squamata</taxon>
        <taxon>Bifurcata</taxon>
        <taxon>Unidentata</taxon>
        <taxon>Episquamata</taxon>
        <taxon>Toxicofera</taxon>
        <taxon>Serpentes</taxon>
        <taxon>Colubroidea</taxon>
        <taxon>Viperidae</taxon>
        <taxon>Crotalinae</taxon>
        <taxon>Bothrops</taxon>
    </lineage>
</organism>
<accession>P24605</accession>
<name>PA2H2_BOTAS</name>
<proteinExistence type="evidence at protein level"/>
<comment type="function">
    <text evidence="1 4 5 6 8 11 13 14 15">Snake venom phospholipase A2 homolog that lacks enzymatic activity. Is myotoxic and induces a dose-dependent edema in the mouse foot pad (PubMed:2781572, PubMed:9839670). Also exhibits strong anticoagulant effects by binding to factor Xa (F10) and inhibiting the prothrombinase activity (IC(50) is 3 nM) (PubMed:18062812). In addition, it shows cytotoxic activity to a variety of cell types and bactericidal activity to a variety of Gram-negative and Gram-positive bacteria (PubMed:7886694, PubMed:9654096, PubMed:9920486). Also induces a very rapid release of large amounts of potassium ions and ATP from muscle cells, which accounts for the pain reaction characteristic of viperid envenomations (PubMed:20660736). The released ATP amplifies the effect of the myotoxins, acting as a 'danger signal', which spreads and causes further damage by acting on purinergic receptors (PubMed:20660736). A model of myotoxic mechanism has been proposed: an apo Lys49-PLA2 is activated by the entrance of a hydrophobic molecule (e.g. fatty acid) at the hydrophobic channel of the protein leading to a reorientation of a monomer (By similarity). This reorientation causes a transition between 'inactive' to 'active' states, causing alignment of C-terminal and membrane-docking sites (MDoS) side-by-side and putting the membrane-disruption sites (MDiS) in the same plane, exposed to solvent and in a symmetric position for both monomers (By similarity). The MDoS region stabilizes the toxin on membrane by the interaction of charged residues with phospholipid head groups (By similarity). Subsequently, the MDiS region destabilizes the membrane with penetration of hydrophobic residues (By similarity). This insertion causes a disorganization of the membrane, allowing an uncontrolled influx of ions (i.e. calcium and sodium), and eventually triggering irreversible intracellular alterations and cell death (By similarity).</text>
</comment>
<comment type="activity regulation">
    <text evidence="3 7 12">Heparin inhibits the myotoxic activity (PubMed:7961981). Suramin inhibits the myotoxic activity (PubMed:15961104). High level of membrane cholesterol content reduces cytolytic activity, whereas low level of membrane cholesterol content increases cytolytic activity (PubMed:21506137).</text>
</comment>
<comment type="biophysicochemical properties">
    <temperatureDependence>
        <text evidence="7">Cytolytic activity upon C2C12 cells is completely abolished at 15 degrees Celsius or below.</text>
    </temperatureDependence>
</comment>
<comment type="subunit">
    <text evidence="2 5 8 10">Homodimer; non-covalently linked (PubMed:15299297, PubMed:1899180, PubMed:2781572, PubMed:7718570). Binds to heparin (PubMed:7961981).</text>
</comment>
<comment type="subcellular location">
    <subcellularLocation>
        <location evidence="5">Secreted</location>
    </subcellularLocation>
</comment>
<comment type="tissue specificity">
    <text evidence="21">Expressed by the venom gland.</text>
</comment>
<comment type="PTM">
    <text evidence="10">It binds long-chain fatty acids covalently by a rapid, spontaneous, and autocatalytic process. When acylated, it binds to the surface of liposomes and isolated muscle membranes, with the fatty acid moiety inserted into the lipid bilayer and possibly acting as an anchor (PubMed:7718570).</text>
</comment>
<comment type="mass spectrometry">
    <text>snakes from Pacific region, Monoisotopic mass.</text>
</comment>
<comment type="mass spectrometry">
    <text>snakes from Caribbean region, Monoisotopic mass.</text>
</comment>
<comment type="pharmaceutical">
    <text evidence="22">K49-P1-20, a twenty-residue N-terminal peptide that corresponds to residues 17-36 of myotoxin II, enhances the activity of endothelin converting enzyme-1 (ECE1) and neprilysin (MME), two enzymes that degrade amyloid beta in the brain. It could be an excellent research tool to study mechanisms of ECE1 and MME stimulation, and a potential novel drug lead in the fight against Alzheimer's disease.</text>
</comment>
<comment type="similarity">
    <text evidence="20">Belongs to the phospholipase A2 family. Group II subfamily. K49 sub-subfamily.</text>
</comment>
<comment type="caution">
    <text evidence="20">Does not bind calcium as one of the calcium-binding sites is lost (Asp-&gt;Lys in position 64, which corresponds to 'Lys-49' in the current nomenclature).</text>
</comment>
<reference key="1">
    <citation type="journal article" date="2001" name="Int. J. Biochem. Cell Biol.">
        <title>Cloning and cDNA sequence analysis of Lys(49) and Asp(49) basic phospholipase A(2) myotoxin isoforms from Bothrops asper.</title>
        <authorList>
            <person name="Lizano S."/>
            <person name="Lambeau G."/>
            <person name="Lazdunski M."/>
        </authorList>
    </citation>
    <scope>NUCLEOTIDE SEQUENCE [MRNA]</scope>
    <source>
        <tissue>Venom gland</tissue>
    </source>
</reference>
<reference key="2">
    <citation type="journal article" date="1991" name="Arch. Biochem. Biophys.">
        <title>Myotoxin II from Bothrops asper (Terciopelo) venom is a lysine-49 phospholipase A2.</title>
        <authorList>
            <person name="Francis B."/>
            <person name="Gutierrez J.M."/>
            <person name="Lomonte B."/>
            <person name="Kaiser I.I."/>
        </authorList>
    </citation>
    <scope>PROTEIN SEQUENCE OF 17-137</scope>
    <scope>FUNCTION</scope>
    <scope>SUBUNIT</scope>
    <scope>SUBCELLULAR LOCATION</scope>
    <scope>VARIANT PHE-130</scope>
    <source>
        <strain>Caribbean</strain>
        <tissue>Venom</tissue>
    </source>
</reference>
<reference key="3">
    <citation type="journal article" date="2022" name="Toxicon">
        <title>Solving the microheterogeneity of Bothrops asper myotoxin-II by high-resolution mass spectrometry: insights into C-terminal region variability in Lys49-phospholipase A2 homologs.</title>
        <authorList>
            <person name="Lomonte B."/>
            <person name="Fernandez J."/>
        </authorList>
    </citation>
    <scope>PROTEIN SEQUENCE OF 125-132</scope>
    <scope>MASS SPECTROMETRY</scope>
    <scope>SUBCELLULAR LOCATION</scope>
    <scope>VARIANT PHE-130</scope>
    <source>
        <strain>Caribbean</strain>
        <strain>Pacific</strain>
        <tissue>Venom</tissue>
    </source>
</reference>
<reference key="4">
    <citation type="journal article" date="1989" name="Toxicon">
        <title>A new muscle damaging toxin, myotoxin II, from the venom of the snake Bothrops asper (terciopelo).</title>
        <authorList>
            <person name="Lomonte B."/>
            <person name="Gutierrez J.M."/>
        </authorList>
    </citation>
    <scope>AMINO-ACID COMPOSITION</scope>
    <scope>FUNCTION</scope>
    <scope>SUBUNIT</scope>
    <source>
        <tissue>Venom</tissue>
    </source>
</reference>
<reference key="5">
    <citation type="journal article" date="1994" name="J. Biol. Chem.">
        <title>Neutralizing interaction between heparins and myotoxin II, a lysine 49 phospholipase A2 from Bothrops asper snake venom. Identification of a heparin-binding and cytolytic toxin region by the use of synthetic peptides and molecular modeling.</title>
        <authorList>
            <person name="Lomonte B."/>
            <person name="Moreno E."/>
            <person name="Tarkowski A."/>
            <person name="Hanson L.A."/>
            <person name="Maccarana M."/>
        </authorList>
    </citation>
    <scope>FUNCTION</scope>
    <scope>ACTIVITY REGULATION</scope>
    <scope>SYNTHESIS OF 121-133</scope>
    <scope>SUBUNIT</scope>
    <source>
        <tissue>Venom</tissue>
    </source>
</reference>
<reference key="6">
    <citation type="journal article" date="1994" name="Toxicon">
        <title>Broad cytolytic specificity of myotoxin II, a lysine-49 phospholipase A2 of Bothrops asper snake venom.</title>
        <authorList>
            <person name="Lomonte B."/>
            <person name="Tarkowski A."/>
            <person name="Hanson L.A."/>
        </authorList>
    </citation>
    <scope>FUNCTION ON A VARIETY OF CELL TYPES</scope>
</reference>
<reference key="7">
    <citation type="journal article" date="1995" name="Biochemistry">
        <title>Autocatalytic acylation of phospholipase-like myotoxins.</title>
        <authorList>
            <person name="Pedersen J.Z."/>
            <person name="Lomonte B."/>
            <person name="Massoud R."/>
            <person name="Gubensek F."/>
            <person name="Gutierrez J.M."/>
            <person name="Rufini S."/>
        </authorList>
    </citation>
    <scope>SUBUNIT</scope>
</reference>
<reference key="8">
    <citation type="journal article" date="1998" name="Eur. J. Biochem.">
        <title>Bactericidal activity of Lys49 and Asp49 myotoxic phospholipases A2 from Bothrops asper snake venom--synthetic Lys49 myotoxin II-(115-129)-peptide identifies its bactericidal region.</title>
        <authorList>
            <person name="Paramo L."/>
            <person name="Lomonte B."/>
            <person name="Pizarro-Cerda J."/>
            <person name="Bengoechea J.A."/>
            <person name="Gorvel J.P."/>
            <person name="Moreno E."/>
        </authorList>
    </citation>
    <scope>FUNCTION ON BACTERIA</scope>
    <scope>SYNTHESIS OF 121-133</scope>
    <source>
        <tissue>Venom</tissue>
    </source>
</reference>
<reference key="9">
    <citation type="journal article" date="1998" name="Toxicon">
        <title>Pharmacological modulation of edema induced by Lys-49 and Asp-49 myotoxic phospholipases A2 isolated from the venom of the snake Bothrops asper (terciopelo).</title>
        <authorList>
            <person name="Chaves F."/>
            <person name="Leon G."/>
            <person name="Alvarado V.H."/>
            <person name="Gutierrez J.M."/>
        </authorList>
    </citation>
    <scope>FUNCTION IN EDEMA</scope>
</reference>
<reference key="10">
    <citation type="journal article" date="1999" name="Toxicon">
        <title>Comparative study of the cytolytic activity of myotoxic phospholipases A2 on mouse endothelial (tEnd) and skeletal muscle (C2C12) cells in vitro.</title>
        <authorList>
            <person name="Lomonte B."/>
            <person name="Angulo Y."/>
            <person name="Rufini S."/>
            <person name="Cho W."/>
            <person name="Giglio J.R."/>
            <person name="Ohno M."/>
            <person name="Daniele J.J."/>
            <person name="Geoghegan P."/>
            <person name="Gutierrez J.M."/>
        </authorList>
    </citation>
    <scope>FUNCTION IN CYTOTOXICITY</scope>
    <source>
        <tissue>Venom</tissue>
    </source>
</reference>
<reference key="11">
    <citation type="journal article" date="2007" name="BMC Struct. Biol.">
        <title>Characterization of a human coagulation factor Xa-binding site on Viperidae snake venom phospholipases A2 by affinity binding studies and molecular bioinformatics.</title>
        <authorList>
            <person name="Faure G."/>
            <person name="Gowda V.T."/>
            <person name="Maroun R.C."/>
        </authorList>
    </citation>
    <scope>FUNCTION AS AN ANTICOAGULANT</scope>
</reference>
<reference key="12">
    <citation type="journal article" date="2010" name="Proc. Natl. Acad. Sci. U.S.A.">
        <title>Bothrops snake myotoxins induce a large efflux of ATP and potassium with spreading of cell damage and pain.</title>
        <authorList>
            <person name="Cintra-Francischinelli M."/>
            <person name="Caccin P."/>
            <person name="Chiavegato A."/>
            <person name="Pizzo P."/>
            <person name="Carmignoto G."/>
            <person name="Angulo Y."/>
            <person name="Lomonte B."/>
            <person name="Gutierrez J.M."/>
            <person name="Montecucco C."/>
        </authorList>
    </citation>
    <scope>FUNCTION</scope>
    <source>
        <tissue>Venom</tissue>
    </source>
</reference>
<reference key="13">
    <citation type="journal article" date="2011" name="Cell Biochem. Funct.">
        <title>Membrane cholesterol modulates the cytolytic mechanism of myotoxin II, a Lys49 phospholipase A2 homologue from the venom of Bothrops asper.</title>
        <authorList>
            <person name="Rangel J."/>
            <person name="Quesada O."/>
            <person name="Gutierrez J.M."/>
            <person name="Angulo Y."/>
            <person name="Lomonte B."/>
        </authorList>
    </citation>
    <scope>ACTIVITY REGULATION BY MEMBRANE CHOLESTEROL</scope>
    <scope>BIOPHYSICOCHEMICAL PROPERTIES</scope>
    <scope>SYNTHESIS OF 121-133</scope>
    <source>
        <tissue>Venom</tissue>
    </source>
</reference>
<reference key="14">
    <citation type="journal article" date="2016" name="Sci. Rep.">
        <title>N-terminal domain of Bothrops asper Myotoxin II enhances the activity of endothelin converting enzyme-1 and neprilysin.</title>
        <authorList>
            <person name="Smith A.I."/>
            <person name="Rajapakse N.W."/>
            <person name="Kleifeld O."/>
            <person name="Lomonte B."/>
            <person name="Sikanyika N.L."/>
            <person name="Spicer A.J."/>
            <person name="Hodgson W.C."/>
            <person name="Conroy P.J."/>
            <person name="Small D.H."/>
            <person name="Kaye D.M."/>
            <person name="Parkington H.C."/>
            <person name="Whisstock J.C."/>
            <person name="Kuruppu S."/>
        </authorList>
    </citation>
    <scope>PHARMACEUTICAL</scope>
    <scope>SYNTHESIS OF 17-36</scope>
</reference>
<reference key="15">
    <citation type="journal article" date="2016" name="Sci. Rep.">
        <title>Corrigendum: N-terminal domain of Bothrops asper Myotoxin II enhances the activity of endothelin converting enzyme-1 and neprilysin.</title>
        <authorList>
            <person name="Smith A.I."/>
            <person name="Rajapakse N.W."/>
            <person name="Kleifeld O."/>
            <person name="Lomonte B."/>
            <person name="Sikanyika N.L."/>
            <person name="Spicer A.J."/>
            <person name="Hodgson W.C."/>
            <person name="Conroy P.J."/>
            <person name="Small D.H."/>
            <person name="Kaye D.M."/>
            <person name="Parkington H.C."/>
            <person name="Whisstock J.C."/>
            <person name="Kuruppu S."/>
        </authorList>
    </citation>
    <scope>ERRATUM OF PUBMED:26931059</scope>
</reference>
<reference evidence="23" key="16">
    <citation type="journal article" date="1995" name="Acta Crystallogr. D">
        <title>Structure of a calcium-independent phospholipase-like myotoxic protein from Bothrops asper venom.</title>
        <authorList>
            <person name="Arni R.K."/>
            <person name="Ward R.J."/>
            <person name="Gutierrez J.M."/>
            <person name="Tulinsky A."/>
        </authorList>
    </citation>
    <scope>X-RAY CRYSTALLOGRAPHY (2.80 ANGSTROMS) OF 17-137</scope>
    <scope>DISULFIDE BONDS</scope>
    <scope>SUBUNIT</scope>
    <source>
        <tissue>Venom</tissue>
    </source>
</reference>
<reference evidence="24" key="17">
    <citation type="journal article" date="2005" name="J. Mol. Biol.">
        <title>Inhibition of myotoxic activity of Bothrops asper myotoxin II by the anti-trypanosomal drug suramin.</title>
        <authorList>
            <person name="Murakami M.T."/>
            <person name="Arruda E.Z."/>
            <person name="Melo P.A."/>
            <person name="Martinez A.B."/>
            <person name="Calil-Elias S."/>
            <person name="Tomaz M.A."/>
            <person name="Lomonte B."/>
            <person name="Gutierrez J.M."/>
            <person name="Arni R.K."/>
        </authorList>
    </citation>
    <scope>X-RAY CRYSTALLOGRAPHY (1.7 ANGSTROMS) OF 17-137 IN COMPLEX WITH SURAMIN</scope>
    <scope>ACTIVITY REGULATION</scope>
    <scope>DISULFIDE BONDS</scope>
    <source>
        <tissue>Venom</tissue>
    </source>
</reference>
<feature type="signal peptide" evidence="5">
    <location>
        <begin position="1"/>
        <end position="16"/>
    </location>
</feature>
<feature type="chain" id="PRO_0000161618" description="Basic phospholipase A2 homolog 2">
    <location>
        <begin position="17"/>
        <end position="137"/>
    </location>
</feature>
<feature type="region of interest" description="Important for membrane-damaging activities in eukaryotes and bacteria; heparin-binding" evidence="7 12 13">
    <location>
        <begin position="121"/>
        <end position="133"/>
    </location>
</feature>
<feature type="site" description="Important residue of the cationic membrane-docking site (MDoS)" evidence="1">
    <location>
        <position position="121"/>
    </location>
</feature>
<feature type="site" description="Important residue of the cationic membrane-docking site (MDoS)" evidence="1">
    <location>
        <position position="124"/>
    </location>
</feature>
<feature type="site" description="Hydrophobic membrane-disruption site (MDiS)" evidence="1">
    <location>
        <position position="127"/>
    </location>
</feature>
<feature type="site" description="Cationic membrane-docking site (MDoS)" evidence="1">
    <location>
        <position position="128"/>
    </location>
</feature>
<feature type="site" description="Hydrophobic membrane-disruption site (MDiS)" evidence="1">
    <location>
        <position position="130"/>
    </location>
</feature>
<feature type="site" description="Cationic membrane-docking site (MDoS)" evidence="1">
    <location>
        <position position="133"/>
    </location>
</feature>
<feature type="disulfide bond" evidence="2 3 23 24">
    <location>
        <begin position="42"/>
        <end position="131"/>
    </location>
</feature>
<feature type="disulfide bond" evidence="2 3 23 24">
    <location>
        <begin position="44"/>
        <end position="60"/>
    </location>
</feature>
<feature type="disulfide bond" evidence="2 3 23 24">
    <location>
        <begin position="59"/>
        <end position="111"/>
    </location>
</feature>
<feature type="disulfide bond" evidence="2 3 23 24">
    <location>
        <begin position="65"/>
        <end position="137"/>
    </location>
</feature>
<feature type="disulfide bond" evidence="2 3 23 24">
    <location>
        <begin position="66"/>
        <end position="104"/>
    </location>
</feature>
<feature type="disulfide bond" evidence="2 3 23 24">
    <location>
        <begin position="73"/>
        <end position="97"/>
    </location>
</feature>
<feature type="disulfide bond" evidence="2 3 23 24">
    <location>
        <begin position="91"/>
        <end position="102"/>
    </location>
</feature>
<feature type="sequence variant" description="Leu in snakes from Caribbean region, Phe in snakes from Pacific region." evidence="5 9">
    <original>L</original>
    <variation>F</variation>
    <location>
        <position position="130"/>
    </location>
</feature>
<feature type="helix" evidence="25">
    <location>
        <begin position="18"/>
        <end position="29"/>
    </location>
</feature>
<feature type="helix" evidence="25">
    <location>
        <begin position="33"/>
        <end position="37"/>
    </location>
</feature>
<feature type="turn" evidence="25">
    <location>
        <begin position="41"/>
        <end position="43"/>
    </location>
</feature>
<feature type="strand" evidence="25">
    <location>
        <begin position="44"/>
        <end position="47"/>
    </location>
</feature>
<feature type="helix" evidence="25">
    <location>
        <begin position="55"/>
        <end position="67"/>
    </location>
</feature>
<feature type="turn" evidence="25">
    <location>
        <begin position="75"/>
        <end position="77"/>
    </location>
</feature>
<feature type="strand" evidence="25">
    <location>
        <begin position="82"/>
        <end position="85"/>
    </location>
</feature>
<feature type="strand" evidence="25">
    <location>
        <begin position="88"/>
        <end position="91"/>
    </location>
</feature>
<feature type="helix" evidence="25">
    <location>
        <begin position="96"/>
        <end position="114"/>
    </location>
</feature>
<feature type="helix" evidence="25">
    <location>
        <begin position="116"/>
        <end position="118"/>
    </location>
</feature>
<feature type="helix" evidence="25">
    <location>
        <begin position="121"/>
        <end position="123"/>
    </location>
</feature>
<feature type="helix" evidence="25">
    <location>
        <begin position="128"/>
        <end position="130"/>
    </location>
</feature>